<reference key="1">
    <citation type="journal article" date="1994" name="Proc. Natl. Acad. Sci. U.S.A.">
        <title>TraI, a LuxI homologue, is responsible for production of conjugation factor, the Ti plasmid N-acylhomoserine lactone autoinducer.</title>
        <authorList>
            <person name="Hwang I."/>
            <person name="Li P.-L."/>
            <person name="Zhang L."/>
            <person name="Piper K.R."/>
            <person name="Cook D.M."/>
            <person name="Tate M.E."/>
            <person name="Farrand S.K."/>
        </authorList>
    </citation>
    <scope>NUCLEOTIDE SEQUENCE [GENOMIC DNA]</scope>
</reference>
<reference key="2">
    <citation type="journal article" date="1998" name="J. Bacteriol.">
        <title>Genetic and sequence analysis of the pTiC58 trb locus, encoding a mating-pair formation system related to members of the type IV secretion family.</title>
        <authorList>
            <person name="Li P.-L."/>
            <person name="Everhart D.M."/>
            <person name="Farrand S.K."/>
        </authorList>
    </citation>
    <scope>NUCLEOTIDE SEQUENCE [GENOMIC DNA]</scope>
</reference>
<reference key="3">
    <citation type="journal article" date="2001" name="Science">
        <title>The genome of the natural genetic engineer Agrobacterium tumefaciens C58.</title>
        <authorList>
            <person name="Wood D.W."/>
            <person name="Setubal J.C."/>
            <person name="Kaul R."/>
            <person name="Monks D.E."/>
            <person name="Kitajima J.P."/>
            <person name="Okura V.K."/>
            <person name="Zhou Y."/>
            <person name="Chen L."/>
            <person name="Wood G.E."/>
            <person name="Almeida N.F. Jr."/>
            <person name="Woo L."/>
            <person name="Chen Y."/>
            <person name="Paulsen I.T."/>
            <person name="Eisen J.A."/>
            <person name="Karp P.D."/>
            <person name="Bovee D. Sr."/>
            <person name="Chapman P."/>
            <person name="Clendenning J."/>
            <person name="Deatherage G."/>
            <person name="Gillet W."/>
            <person name="Grant C."/>
            <person name="Kutyavin T."/>
            <person name="Levy R."/>
            <person name="Li M.-J."/>
            <person name="McClelland E."/>
            <person name="Palmieri A."/>
            <person name="Raymond C."/>
            <person name="Rouse G."/>
            <person name="Saenphimmachak C."/>
            <person name="Wu Z."/>
            <person name="Romero P."/>
            <person name="Gordon D."/>
            <person name="Zhang S."/>
            <person name="Yoo H."/>
            <person name="Tao Y."/>
            <person name="Biddle P."/>
            <person name="Jung M."/>
            <person name="Krespan W."/>
            <person name="Perry M."/>
            <person name="Gordon-Kamm B."/>
            <person name="Liao L."/>
            <person name="Kim S."/>
            <person name="Hendrick C."/>
            <person name="Zhao Z.-Y."/>
            <person name="Dolan M."/>
            <person name="Chumley F."/>
            <person name="Tingey S.V."/>
            <person name="Tomb J.-F."/>
            <person name="Gordon M.P."/>
            <person name="Olson M.V."/>
            <person name="Nester E.W."/>
        </authorList>
    </citation>
    <scope>NUCLEOTIDE SEQUENCE [LARGE SCALE GENOMIC DNA]</scope>
</reference>
<reference key="4">
    <citation type="journal article" date="2001" name="Science">
        <title>Genome sequence of the plant pathogen and biotechnology agent Agrobacterium tumefaciens C58.</title>
        <authorList>
            <person name="Goodner B."/>
            <person name="Hinkle G."/>
            <person name="Gattung S."/>
            <person name="Miller N."/>
            <person name="Blanchard M."/>
            <person name="Qurollo B."/>
            <person name="Goldman B.S."/>
            <person name="Cao Y."/>
            <person name="Askenazi M."/>
            <person name="Halling C."/>
            <person name="Mullin L."/>
            <person name="Houmiel K."/>
            <person name="Gordon J."/>
            <person name="Vaudin M."/>
            <person name="Iartchouk O."/>
            <person name="Epp A."/>
            <person name="Liu F."/>
            <person name="Wollam C."/>
            <person name="Allinger M."/>
            <person name="Doughty D."/>
            <person name="Scott C."/>
            <person name="Lappas C."/>
            <person name="Markelz B."/>
            <person name="Flanagan C."/>
            <person name="Crowell C."/>
            <person name="Gurson J."/>
            <person name="Lomo C."/>
            <person name="Sear C."/>
            <person name="Strub G."/>
            <person name="Cielo C."/>
            <person name="Slater S."/>
        </authorList>
    </citation>
    <scope>NUCLEOTIDE SEQUENCE [LARGE SCALE GENOMIC DNA]</scope>
    <source>
        <strain>C58 / ATCC 33970</strain>
    </source>
</reference>
<accession>P33907</accession>
<feature type="chain" id="PRO_0000210898" description="Acyl-homoserine-lactone synthase">
    <location>
        <begin position="1"/>
        <end position="211"/>
    </location>
</feature>
<name>TRAI_AGRFC</name>
<keyword id="KW-0071">Autoinducer synthesis</keyword>
<keyword id="KW-0184">Conjugation</keyword>
<keyword id="KW-0614">Plasmid</keyword>
<keyword id="KW-0673">Quorum sensing</keyword>
<keyword id="KW-1185">Reference proteome</keyword>
<keyword id="KW-0949">S-adenosyl-L-methionine</keyword>
<keyword id="KW-0808">Transferase</keyword>
<proteinExistence type="inferred from homology"/>
<sequence>MRILTVSPDQYERYRSFLKQMHRLRATVFGGRLEWDVSIIAGEERDQYDNFKPSYLLAITDSGRVAGCVRLLPACGPTMLEQTFSQLLEMGSLAAHSGMVESSRFCVDTSLVSRRDASQLHLATLTLFAGIIEWSMASGYTEIVTATDLRFERILKRAGWPMRRLGEPTAIGNTIAIAGRLPADRASFEQVCPPGYYSIPRIDVAAIRSAA</sequence>
<protein>
    <recommendedName>
        <fullName>Acyl-homoserine-lactone synthase</fullName>
        <ecNumber>2.3.1.184</ecNumber>
    </recommendedName>
    <alternativeName>
        <fullName>Autoinducer synthesis protein TraI</fullName>
    </alternativeName>
</protein>
<dbReference type="EC" id="2.3.1.184"/>
<dbReference type="EMBL" id="L22207">
    <property type="protein sequence ID" value="AAA27405.1"/>
    <property type="molecule type" value="Genomic_DNA"/>
</dbReference>
<dbReference type="EMBL" id="AF057718">
    <property type="protein sequence ID" value="AAC82627.1"/>
    <property type="molecule type" value="Genomic_DNA"/>
</dbReference>
<dbReference type="EMBL" id="AE007871">
    <property type="protein sequence ID" value="AAK91000.1"/>
    <property type="molecule type" value="Genomic_DNA"/>
</dbReference>
<dbReference type="PIR" id="AH3232">
    <property type="entry name" value="AH3232"/>
</dbReference>
<dbReference type="RefSeq" id="NP_396559.1">
    <property type="nucleotide sequence ID" value="NC_003065.3"/>
</dbReference>
<dbReference type="RefSeq" id="WP_010974838.1">
    <property type="nucleotide sequence ID" value="NZ_KY000036.1"/>
</dbReference>
<dbReference type="SMR" id="P33907"/>
<dbReference type="EnsemblBacteria" id="AAK91000">
    <property type="protein sequence ID" value="AAK91000"/>
    <property type="gene ID" value="Atu6042"/>
</dbReference>
<dbReference type="GeneID" id="86882492"/>
<dbReference type="KEGG" id="atu:Atu6042"/>
<dbReference type="PATRIC" id="fig|176299.10.peg.5248"/>
<dbReference type="HOGENOM" id="CLU_085711_4_0_5"/>
<dbReference type="OrthoDB" id="6169313at2"/>
<dbReference type="PhylomeDB" id="P33907"/>
<dbReference type="BioCyc" id="AGRO:ATU6042-MONOMER"/>
<dbReference type="BioCyc" id="MetaCyc:MONOMER-14566"/>
<dbReference type="Proteomes" id="UP000000813">
    <property type="component" value="Plasmid Ti"/>
</dbReference>
<dbReference type="GO" id="GO:0061579">
    <property type="term" value="F:N-acyl homoserine lactone synthase activity"/>
    <property type="evidence" value="ECO:0007669"/>
    <property type="project" value="UniProtKB-EC"/>
</dbReference>
<dbReference type="GO" id="GO:0009372">
    <property type="term" value="P:quorum sensing"/>
    <property type="evidence" value="ECO:0007669"/>
    <property type="project" value="UniProtKB-KW"/>
</dbReference>
<dbReference type="GO" id="GO:0007165">
    <property type="term" value="P:signal transduction"/>
    <property type="evidence" value="ECO:0007669"/>
    <property type="project" value="TreeGrafter"/>
</dbReference>
<dbReference type="Gene3D" id="3.40.630.30">
    <property type="match status" value="1"/>
</dbReference>
<dbReference type="InterPro" id="IPR016181">
    <property type="entry name" value="Acyl_CoA_acyltransferase"/>
</dbReference>
<dbReference type="InterPro" id="IPR018311">
    <property type="entry name" value="Autoind_synth_CS"/>
</dbReference>
<dbReference type="InterPro" id="IPR001690">
    <property type="entry name" value="Autoind_synthase"/>
</dbReference>
<dbReference type="NCBIfam" id="NF010408">
    <property type="entry name" value="PRK13834.1"/>
    <property type="match status" value="1"/>
</dbReference>
<dbReference type="PANTHER" id="PTHR39322">
    <property type="entry name" value="ACYL-HOMOSERINE-LACTONE SYNTHASE"/>
    <property type="match status" value="1"/>
</dbReference>
<dbReference type="PANTHER" id="PTHR39322:SF1">
    <property type="entry name" value="ISOVALERYL-HOMOSERINE LACTONE SYNTHASE"/>
    <property type="match status" value="1"/>
</dbReference>
<dbReference type="Pfam" id="PF00765">
    <property type="entry name" value="Autoind_synth"/>
    <property type="match status" value="1"/>
</dbReference>
<dbReference type="PRINTS" id="PR01549">
    <property type="entry name" value="AUTOINDCRSYN"/>
</dbReference>
<dbReference type="SUPFAM" id="SSF55729">
    <property type="entry name" value="Acyl-CoA N-acyltransferases (Nat)"/>
    <property type="match status" value="1"/>
</dbReference>
<dbReference type="PROSITE" id="PS00949">
    <property type="entry name" value="AUTOINDUCER_SYNTH_1"/>
    <property type="match status" value="1"/>
</dbReference>
<dbReference type="PROSITE" id="PS51187">
    <property type="entry name" value="AUTOINDUCER_SYNTH_2"/>
    <property type="match status" value="1"/>
</dbReference>
<geneLocation type="plasmid">
    <name>pTiC58</name>
</geneLocation>
<comment type="function">
    <text>Required for the synthesis of OHHL (N-(3-oxohexanoyl)-L-homoserine lactone), an autoinducer molecule which binds to TraR and thus acts in the control of conjugal transfer.</text>
</comment>
<comment type="catalytic activity">
    <reaction>
        <text>a fatty acyl-[ACP] + S-adenosyl-L-methionine = an N-acyl-L-homoserine lactone + S-methyl-5'-thioadenosine + holo-[ACP] + H(+)</text>
        <dbReference type="Rhea" id="RHEA:10096"/>
        <dbReference type="Rhea" id="RHEA-COMP:9685"/>
        <dbReference type="Rhea" id="RHEA-COMP:14125"/>
        <dbReference type="ChEBI" id="CHEBI:15378"/>
        <dbReference type="ChEBI" id="CHEBI:17509"/>
        <dbReference type="ChEBI" id="CHEBI:55474"/>
        <dbReference type="ChEBI" id="CHEBI:59789"/>
        <dbReference type="ChEBI" id="CHEBI:64479"/>
        <dbReference type="ChEBI" id="CHEBI:138651"/>
        <dbReference type="EC" id="2.3.1.184"/>
    </reaction>
</comment>
<comment type="similarity">
    <text evidence="1">Belongs to the autoinducer synthase family.</text>
</comment>
<gene>
    <name type="primary">traI</name>
    <name type="ordered locus">Atu6042</name>
    <name type="ORF">AGR_pTi_91</name>
</gene>
<organism>
    <name type="scientific">Agrobacterium fabrum (strain C58 / ATCC 33970)</name>
    <name type="common">Agrobacterium tumefaciens (strain C58)</name>
    <dbReference type="NCBI Taxonomy" id="176299"/>
    <lineage>
        <taxon>Bacteria</taxon>
        <taxon>Pseudomonadati</taxon>
        <taxon>Pseudomonadota</taxon>
        <taxon>Alphaproteobacteria</taxon>
        <taxon>Hyphomicrobiales</taxon>
        <taxon>Rhizobiaceae</taxon>
        <taxon>Rhizobium/Agrobacterium group</taxon>
        <taxon>Agrobacterium</taxon>
        <taxon>Agrobacterium tumefaciens complex</taxon>
    </lineage>
</organism>
<evidence type="ECO:0000255" key="1">
    <source>
        <dbReference type="PROSITE-ProRule" id="PRU00533"/>
    </source>
</evidence>